<organism>
    <name type="scientific">Nitrobacter hamburgensis (strain DSM 10229 / NCIMB 13809 / X14)</name>
    <dbReference type="NCBI Taxonomy" id="323097"/>
    <lineage>
        <taxon>Bacteria</taxon>
        <taxon>Pseudomonadati</taxon>
        <taxon>Pseudomonadota</taxon>
        <taxon>Alphaproteobacteria</taxon>
        <taxon>Hyphomicrobiales</taxon>
        <taxon>Nitrobacteraceae</taxon>
        <taxon>Nitrobacter</taxon>
    </lineage>
</organism>
<proteinExistence type="inferred from homology"/>
<comment type="function">
    <text evidence="1">Tetrapolymerization of the monopyrrole PBG into the hydroxymethylbilane pre-uroporphyrinogen in several discrete steps.</text>
</comment>
<comment type="catalytic activity">
    <reaction evidence="1">
        <text>4 porphobilinogen + H2O = hydroxymethylbilane + 4 NH4(+)</text>
        <dbReference type="Rhea" id="RHEA:13185"/>
        <dbReference type="ChEBI" id="CHEBI:15377"/>
        <dbReference type="ChEBI" id="CHEBI:28938"/>
        <dbReference type="ChEBI" id="CHEBI:57845"/>
        <dbReference type="ChEBI" id="CHEBI:58126"/>
        <dbReference type="EC" id="2.5.1.61"/>
    </reaction>
</comment>
<comment type="cofactor">
    <cofactor evidence="1">
        <name>dipyrromethane</name>
        <dbReference type="ChEBI" id="CHEBI:60342"/>
    </cofactor>
    <text evidence="1">Binds 1 dipyrromethane group covalently.</text>
</comment>
<comment type="pathway">
    <text evidence="1">Porphyrin-containing compound metabolism; protoporphyrin-IX biosynthesis; coproporphyrinogen-III from 5-aminolevulinate: step 2/4.</text>
</comment>
<comment type="subunit">
    <text evidence="1">Monomer.</text>
</comment>
<comment type="miscellaneous">
    <text evidence="1">The porphobilinogen subunits are added to the dipyrromethane group.</text>
</comment>
<comment type="similarity">
    <text evidence="1">Belongs to the HMBS family.</text>
</comment>
<evidence type="ECO:0000255" key="1">
    <source>
        <dbReference type="HAMAP-Rule" id="MF_00260"/>
    </source>
</evidence>
<dbReference type="EC" id="2.5.1.61" evidence="1"/>
<dbReference type="EMBL" id="CP000319">
    <property type="protein sequence ID" value="ABE61452.1"/>
    <property type="molecule type" value="Genomic_DNA"/>
</dbReference>
<dbReference type="RefSeq" id="WP_011509156.1">
    <property type="nucleotide sequence ID" value="NC_007964.1"/>
</dbReference>
<dbReference type="SMR" id="Q1QQP5"/>
<dbReference type="STRING" id="323097.Nham_0562"/>
<dbReference type="KEGG" id="nha:Nham_0562"/>
<dbReference type="eggNOG" id="COG0181">
    <property type="taxonomic scope" value="Bacteria"/>
</dbReference>
<dbReference type="HOGENOM" id="CLU_019704_1_2_5"/>
<dbReference type="OrthoDB" id="9810298at2"/>
<dbReference type="UniPathway" id="UPA00251">
    <property type="reaction ID" value="UER00319"/>
</dbReference>
<dbReference type="Proteomes" id="UP000001953">
    <property type="component" value="Chromosome"/>
</dbReference>
<dbReference type="GO" id="GO:0005737">
    <property type="term" value="C:cytoplasm"/>
    <property type="evidence" value="ECO:0007669"/>
    <property type="project" value="TreeGrafter"/>
</dbReference>
<dbReference type="GO" id="GO:0004418">
    <property type="term" value="F:hydroxymethylbilane synthase activity"/>
    <property type="evidence" value="ECO:0007669"/>
    <property type="project" value="UniProtKB-UniRule"/>
</dbReference>
<dbReference type="GO" id="GO:0006782">
    <property type="term" value="P:protoporphyrinogen IX biosynthetic process"/>
    <property type="evidence" value="ECO:0007669"/>
    <property type="project" value="UniProtKB-UniRule"/>
</dbReference>
<dbReference type="FunFam" id="3.40.190.10:FF:000005">
    <property type="entry name" value="Porphobilinogen deaminase"/>
    <property type="match status" value="1"/>
</dbReference>
<dbReference type="Gene3D" id="3.40.190.10">
    <property type="entry name" value="Periplasmic binding protein-like II"/>
    <property type="match status" value="2"/>
</dbReference>
<dbReference type="Gene3D" id="3.30.160.40">
    <property type="entry name" value="Porphobilinogen deaminase, C-terminal domain"/>
    <property type="match status" value="1"/>
</dbReference>
<dbReference type="HAMAP" id="MF_00260">
    <property type="entry name" value="Porphobil_deam"/>
    <property type="match status" value="1"/>
</dbReference>
<dbReference type="InterPro" id="IPR000860">
    <property type="entry name" value="HemC"/>
</dbReference>
<dbReference type="InterPro" id="IPR022419">
    <property type="entry name" value="Porphobilin_deaminase_cofac_BS"/>
</dbReference>
<dbReference type="InterPro" id="IPR022417">
    <property type="entry name" value="Porphobilin_deaminase_N"/>
</dbReference>
<dbReference type="InterPro" id="IPR022418">
    <property type="entry name" value="Porphobilinogen_deaminase_C"/>
</dbReference>
<dbReference type="InterPro" id="IPR036803">
    <property type="entry name" value="Porphobilinogen_deaminase_C_sf"/>
</dbReference>
<dbReference type="NCBIfam" id="TIGR00212">
    <property type="entry name" value="hemC"/>
    <property type="match status" value="1"/>
</dbReference>
<dbReference type="PANTHER" id="PTHR11557">
    <property type="entry name" value="PORPHOBILINOGEN DEAMINASE"/>
    <property type="match status" value="1"/>
</dbReference>
<dbReference type="PANTHER" id="PTHR11557:SF0">
    <property type="entry name" value="PORPHOBILINOGEN DEAMINASE"/>
    <property type="match status" value="1"/>
</dbReference>
<dbReference type="Pfam" id="PF01379">
    <property type="entry name" value="Porphobil_deam"/>
    <property type="match status" value="1"/>
</dbReference>
<dbReference type="Pfam" id="PF03900">
    <property type="entry name" value="Porphobil_deamC"/>
    <property type="match status" value="1"/>
</dbReference>
<dbReference type="PIRSF" id="PIRSF001438">
    <property type="entry name" value="4pyrrol_synth_OHMeBilane_synth"/>
    <property type="match status" value="1"/>
</dbReference>
<dbReference type="PRINTS" id="PR00151">
    <property type="entry name" value="PORPHBDMNASE"/>
</dbReference>
<dbReference type="SUPFAM" id="SSF53850">
    <property type="entry name" value="Periplasmic binding protein-like II"/>
    <property type="match status" value="1"/>
</dbReference>
<dbReference type="SUPFAM" id="SSF54782">
    <property type="entry name" value="Porphobilinogen deaminase (hydroxymethylbilane synthase), C-terminal domain"/>
    <property type="match status" value="1"/>
</dbReference>
<dbReference type="PROSITE" id="PS00533">
    <property type="entry name" value="PORPHOBILINOGEN_DEAM"/>
    <property type="match status" value="1"/>
</dbReference>
<sequence>MQSSGETDILATIGTRGSALALAQANEVRDRLARAHQVAPERIVIKTIRTSGDAIQDRPLFDVGGKGLFTKEIEEALLAGSIDFAVHSSKDVPTFLPDATWLPAFLPREDVRDAFISPRAASLNDLPAGSIVGTASLRRQAMVLRLRPDLKVSVIRGNVETRLRKLVAGEADATLLALAGLNRLGLQDRATRILETDEFLPAVGQGAIAIESRRDDDRINAFVKAIGDSETEVALSAERSFLALLDGSCRTPIGGHCRVNGDRIHFRGLIISPDGTQSYETTREGARADAAALGADAARELRERAGEKFFTLFAGA</sequence>
<feature type="chain" id="PRO_1000047753" description="Porphobilinogen deaminase">
    <location>
        <begin position="1"/>
        <end position="316"/>
    </location>
</feature>
<feature type="modified residue" description="S-(dipyrrolylmethanemethyl)cysteine" evidence="1">
    <location>
        <position position="249"/>
    </location>
</feature>
<protein>
    <recommendedName>
        <fullName evidence="1">Porphobilinogen deaminase</fullName>
        <shortName evidence="1">PBG</shortName>
        <ecNumber evidence="1">2.5.1.61</ecNumber>
    </recommendedName>
    <alternativeName>
        <fullName evidence="1">Hydroxymethylbilane synthase</fullName>
        <shortName evidence="1">HMBS</shortName>
    </alternativeName>
    <alternativeName>
        <fullName evidence="1">Pre-uroporphyrinogen synthase</fullName>
    </alternativeName>
</protein>
<gene>
    <name evidence="1" type="primary">hemC</name>
    <name type="ordered locus">Nham_0562</name>
</gene>
<keyword id="KW-0627">Porphyrin biosynthesis</keyword>
<keyword id="KW-1185">Reference proteome</keyword>
<keyword id="KW-0808">Transferase</keyword>
<accession>Q1QQP5</accession>
<reference key="1">
    <citation type="submission" date="2006-03" db="EMBL/GenBank/DDBJ databases">
        <title>Complete sequence of chromosome of Nitrobacter hamburgensis X14.</title>
        <authorList>
            <consortium name="US DOE Joint Genome Institute"/>
            <person name="Copeland A."/>
            <person name="Lucas S."/>
            <person name="Lapidus A."/>
            <person name="Barry K."/>
            <person name="Detter J.C."/>
            <person name="Glavina del Rio T."/>
            <person name="Hammon N."/>
            <person name="Israni S."/>
            <person name="Dalin E."/>
            <person name="Tice H."/>
            <person name="Pitluck S."/>
            <person name="Chain P."/>
            <person name="Malfatti S."/>
            <person name="Shin M."/>
            <person name="Vergez L."/>
            <person name="Schmutz J."/>
            <person name="Larimer F."/>
            <person name="Land M."/>
            <person name="Hauser L."/>
            <person name="Kyrpides N."/>
            <person name="Ivanova N."/>
            <person name="Ward B."/>
            <person name="Arp D."/>
            <person name="Klotz M."/>
            <person name="Stein L."/>
            <person name="O'Mullan G."/>
            <person name="Starkenburg S."/>
            <person name="Sayavedra L."/>
            <person name="Poret-Peterson A.T."/>
            <person name="Gentry M.E."/>
            <person name="Bruce D."/>
            <person name="Richardson P."/>
        </authorList>
    </citation>
    <scope>NUCLEOTIDE SEQUENCE [LARGE SCALE GENOMIC DNA]</scope>
    <source>
        <strain>DSM 10229 / NCIMB 13809 / X14</strain>
    </source>
</reference>
<name>HEM3_NITHX</name>